<feature type="chain" id="PRO_1000062358" description="NADPH-dependent 7-cyano-7-deazaguanine reductase">
    <location>
        <begin position="1"/>
        <end position="273"/>
    </location>
</feature>
<feature type="active site" description="Thioimide intermediate" evidence="1">
    <location>
        <position position="179"/>
    </location>
</feature>
<feature type="active site" description="Proton donor" evidence="1">
    <location>
        <position position="186"/>
    </location>
</feature>
<feature type="binding site" evidence="1">
    <location>
        <begin position="81"/>
        <end position="83"/>
    </location>
    <ligand>
        <name>substrate</name>
    </ligand>
</feature>
<feature type="binding site" evidence="1">
    <location>
        <begin position="83"/>
        <end position="84"/>
    </location>
    <ligand>
        <name>NADPH</name>
        <dbReference type="ChEBI" id="CHEBI:57783"/>
    </ligand>
</feature>
<feature type="binding site" evidence="1">
    <location>
        <begin position="218"/>
        <end position="219"/>
    </location>
    <ligand>
        <name>substrate</name>
    </ligand>
</feature>
<feature type="binding site" evidence="1">
    <location>
        <begin position="247"/>
        <end position="248"/>
    </location>
    <ligand>
        <name>NADPH</name>
        <dbReference type="ChEBI" id="CHEBI:57783"/>
    </ligand>
</feature>
<sequence>MPLSASLLGKNSTYKDSYDATLLFKIPRINNRNELGINSNNLPFYGVDIWNTYELSCLNKNGKPWVGVGTFYIPTDSENIVESKSFKLYLNSFNNFVVESIEELERIILQDLSNVTHAKVTGQIFPINTKIEFGLPSGKNIDDLNIECNNYCPPDNSLIEYEDVLVEEEINSNLLKSNCLVTGQPDWGTIVIKYRGKKLKHDSFLKYLISFRNYNEFAEQCAERIFTDINNSINPDFLSIYIVYTRRGGIDICPYRSLDQNYNLPSNKRLIRQ</sequence>
<accession>A8EXD9</accession>
<protein>
    <recommendedName>
        <fullName evidence="1">NADPH-dependent 7-cyano-7-deazaguanine reductase</fullName>
        <ecNumber evidence="1">1.7.1.13</ecNumber>
    </recommendedName>
    <alternativeName>
        <fullName evidence="1">7-cyano-7-carbaguanine reductase</fullName>
    </alternativeName>
    <alternativeName>
        <fullName evidence="1">NADPH-dependent nitrile oxidoreductase</fullName>
    </alternativeName>
    <alternativeName>
        <fullName evidence="1">PreQ(0) reductase</fullName>
    </alternativeName>
</protein>
<name>QUEF_RICCK</name>
<proteinExistence type="inferred from homology"/>
<keyword id="KW-0963">Cytoplasm</keyword>
<keyword id="KW-0521">NADP</keyword>
<keyword id="KW-0560">Oxidoreductase</keyword>
<keyword id="KW-0671">Queuosine biosynthesis</keyword>
<dbReference type="EC" id="1.7.1.13" evidence="1"/>
<dbReference type="EMBL" id="CP000409">
    <property type="protein sequence ID" value="ABV73022.1"/>
    <property type="molecule type" value="Genomic_DNA"/>
</dbReference>
<dbReference type="RefSeq" id="WP_012148223.1">
    <property type="nucleotide sequence ID" value="NC_009879.1"/>
</dbReference>
<dbReference type="SMR" id="A8EXD9"/>
<dbReference type="STRING" id="293613.A1E_00345"/>
<dbReference type="KEGG" id="rcm:A1E_00345"/>
<dbReference type="eggNOG" id="COG0780">
    <property type="taxonomic scope" value="Bacteria"/>
</dbReference>
<dbReference type="eggNOG" id="COG2904">
    <property type="taxonomic scope" value="Bacteria"/>
</dbReference>
<dbReference type="HOGENOM" id="CLU_054738_0_0_5"/>
<dbReference type="UniPathway" id="UPA00392"/>
<dbReference type="Proteomes" id="UP000007056">
    <property type="component" value="Chromosome"/>
</dbReference>
<dbReference type="GO" id="GO:0005737">
    <property type="term" value="C:cytoplasm"/>
    <property type="evidence" value="ECO:0007669"/>
    <property type="project" value="UniProtKB-SubCell"/>
</dbReference>
<dbReference type="GO" id="GO:0033739">
    <property type="term" value="F:preQ1 synthase activity"/>
    <property type="evidence" value="ECO:0007669"/>
    <property type="project" value="UniProtKB-UniRule"/>
</dbReference>
<dbReference type="GO" id="GO:0008616">
    <property type="term" value="P:queuosine biosynthetic process"/>
    <property type="evidence" value="ECO:0007669"/>
    <property type="project" value="UniProtKB-UniRule"/>
</dbReference>
<dbReference type="GO" id="GO:0006400">
    <property type="term" value="P:tRNA modification"/>
    <property type="evidence" value="ECO:0007669"/>
    <property type="project" value="UniProtKB-UniRule"/>
</dbReference>
<dbReference type="Gene3D" id="3.30.1130.10">
    <property type="match status" value="2"/>
</dbReference>
<dbReference type="HAMAP" id="MF_00817">
    <property type="entry name" value="QueF_type2"/>
    <property type="match status" value="1"/>
</dbReference>
<dbReference type="InterPro" id="IPR043133">
    <property type="entry name" value="GTP-CH-I_C/QueF"/>
</dbReference>
<dbReference type="InterPro" id="IPR050084">
    <property type="entry name" value="NADPH_dep_7-cyano-7-deazaG_red"/>
</dbReference>
<dbReference type="InterPro" id="IPR029500">
    <property type="entry name" value="QueF"/>
</dbReference>
<dbReference type="InterPro" id="IPR029139">
    <property type="entry name" value="QueF_N"/>
</dbReference>
<dbReference type="InterPro" id="IPR016428">
    <property type="entry name" value="QueF_type2"/>
</dbReference>
<dbReference type="NCBIfam" id="TIGR03138">
    <property type="entry name" value="QueF"/>
    <property type="match status" value="1"/>
</dbReference>
<dbReference type="PANTHER" id="PTHR34354">
    <property type="entry name" value="NADPH-DEPENDENT 7-CYANO-7-DEAZAGUANINE REDUCTASE"/>
    <property type="match status" value="1"/>
</dbReference>
<dbReference type="PANTHER" id="PTHR34354:SF1">
    <property type="entry name" value="NADPH-DEPENDENT 7-CYANO-7-DEAZAGUANINE REDUCTASE"/>
    <property type="match status" value="1"/>
</dbReference>
<dbReference type="Pfam" id="PF14489">
    <property type="entry name" value="QueF"/>
    <property type="match status" value="1"/>
</dbReference>
<dbReference type="Pfam" id="PF14819">
    <property type="entry name" value="QueF_N"/>
    <property type="match status" value="1"/>
</dbReference>
<dbReference type="PIRSF" id="PIRSF004750">
    <property type="entry name" value="Nitrile_oxidored_YqcD_prd"/>
    <property type="match status" value="1"/>
</dbReference>
<dbReference type="SUPFAM" id="SSF55620">
    <property type="entry name" value="Tetrahydrobiopterin biosynthesis enzymes-like"/>
    <property type="match status" value="1"/>
</dbReference>
<comment type="function">
    <text evidence="1">Catalyzes the NADPH-dependent reduction of 7-cyano-7-deazaguanine (preQ0) to 7-aminomethyl-7-deazaguanine (preQ1).</text>
</comment>
<comment type="catalytic activity">
    <reaction evidence="1">
        <text>7-aminomethyl-7-carbaguanine + 2 NADP(+) = 7-cyano-7-deazaguanine + 2 NADPH + 3 H(+)</text>
        <dbReference type="Rhea" id="RHEA:13409"/>
        <dbReference type="ChEBI" id="CHEBI:15378"/>
        <dbReference type="ChEBI" id="CHEBI:45075"/>
        <dbReference type="ChEBI" id="CHEBI:57783"/>
        <dbReference type="ChEBI" id="CHEBI:58349"/>
        <dbReference type="ChEBI" id="CHEBI:58703"/>
        <dbReference type="EC" id="1.7.1.13"/>
    </reaction>
</comment>
<comment type="pathway">
    <text evidence="1">tRNA modification; tRNA-queuosine biosynthesis.</text>
</comment>
<comment type="subunit">
    <text evidence="1">Homodimer.</text>
</comment>
<comment type="subcellular location">
    <subcellularLocation>
        <location evidence="1">Cytoplasm</location>
    </subcellularLocation>
</comment>
<comment type="similarity">
    <text evidence="1">Belongs to the GTP cyclohydrolase I family. QueF type 2 subfamily.</text>
</comment>
<reference key="1">
    <citation type="submission" date="2007-09" db="EMBL/GenBank/DDBJ databases">
        <title>Complete genome sequence of Rickettsia canadensis.</title>
        <authorList>
            <person name="Madan A."/>
            <person name="Fahey J."/>
            <person name="Helton E."/>
            <person name="Ketteman M."/>
            <person name="Madan A."/>
            <person name="Rodrigues S."/>
            <person name="Sanchez A."/>
            <person name="Whiting M."/>
            <person name="Dasch G."/>
            <person name="Eremeeva M."/>
        </authorList>
    </citation>
    <scope>NUCLEOTIDE SEQUENCE [LARGE SCALE GENOMIC DNA]</scope>
    <source>
        <strain>McKiel</strain>
    </source>
</reference>
<gene>
    <name evidence="1" type="primary">queF</name>
    <name type="ordered locus">A1E_00345</name>
</gene>
<evidence type="ECO:0000255" key="1">
    <source>
        <dbReference type="HAMAP-Rule" id="MF_00817"/>
    </source>
</evidence>
<organism>
    <name type="scientific">Rickettsia canadensis (strain McKiel)</name>
    <dbReference type="NCBI Taxonomy" id="293613"/>
    <lineage>
        <taxon>Bacteria</taxon>
        <taxon>Pseudomonadati</taxon>
        <taxon>Pseudomonadota</taxon>
        <taxon>Alphaproteobacteria</taxon>
        <taxon>Rickettsiales</taxon>
        <taxon>Rickettsiaceae</taxon>
        <taxon>Rickettsieae</taxon>
        <taxon>Rickettsia</taxon>
        <taxon>belli group</taxon>
    </lineage>
</organism>